<keyword id="KW-0010">Activator</keyword>
<keyword id="KW-0025">Alternative splicing</keyword>
<keyword id="KW-0073">Auxin biosynthesis</keyword>
<keyword id="KW-0927">Auxin signaling pathway</keyword>
<keyword id="KW-0217">Developmental protein</keyword>
<keyword id="KW-0238">DNA-binding</keyword>
<keyword id="KW-0479">Metal-binding</keyword>
<keyword id="KW-0539">Nucleus</keyword>
<keyword id="KW-1185">Reference proteome</keyword>
<keyword id="KW-0862">Zinc</keyword>
<feature type="chain" id="PRO_0000424582" description="Protein LATERAL ROOT PRIMORDIUM 1">
    <location>
        <begin position="1"/>
        <end position="320"/>
    </location>
</feature>
<feature type="DNA-binding region" description="Zn(2)-C6 fungal-type; degenerate" evidence="1">
    <location>
        <begin position="112"/>
        <end position="139"/>
    </location>
</feature>
<feature type="region of interest" description="Disordered" evidence="2">
    <location>
        <begin position="90"/>
        <end position="110"/>
    </location>
</feature>
<feature type="region of interest" description="Disordered" evidence="2">
    <location>
        <begin position="150"/>
        <end position="223"/>
    </location>
</feature>
<feature type="short sequence motif" description="Required for homo- and heterodimerization" evidence="1">
    <location>
        <begin position="256"/>
        <end position="259"/>
    </location>
</feature>
<feature type="compositionally biased region" description="Low complexity" evidence="2">
    <location>
        <begin position="168"/>
        <end position="177"/>
    </location>
</feature>
<feature type="compositionally biased region" description="Polar residues" evidence="2">
    <location>
        <begin position="193"/>
        <end position="214"/>
    </location>
</feature>
<feature type="binding site" evidence="1">
    <location>
        <position position="112"/>
    </location>
    <ligand>
        <name>Zn(2+)</name>
        <dbReference type="ChEBI" id="CHEBI:29105"/>
        <label>1</label>
    </ligand>
</feature>
<feature type="binding site" evidence="1">
    <location>
        <position position="112"/>
    </location>
    <ligand>
        <name>Zn(2+)</name>
        <dbReference type="ChEBI" id="CHEBI:29105"/>
        <label>2</label>
    </ligand>
</feature>
<feature type="binding site" evidence="1">
    <location>
        <position position="115"/>
    </location>
    <ligand>
        <name>Zn(2+)</name>
        <dbReference type="ChEBI" id="CHEBI:29105"/>
        <label>1</label>
    </ligand>
</feature>
<feature type="binding site" evidence="1">
    <location>
        <position position="123"/>
    </location>
    <ligand>
        <name>Zn(2+)</name>
        <dbReference type="ChEBI" id="CHEBI:29105"/>
        <label>1</label>
    </ligand>
</feature>
<feature type="binding site" evidence="1">
    <location>
        <position position="128"/>
    </location>
    <ligand>
        <name>Zn(2+)</name>
        <dbReference type="ChEBI" id="CHEBI:29105"/>
        <label>1</label>
    </ligand>
</feature>
<feature type="binding site" evidence="1">
    <location>
        <position position="128"/>
    </location>
    <ligand>
        <name>Zn(2+)</name>
        <dbReference type="ChEBI" id="CHEBI:29105"/>
        <label>2</label>
    </ligand>
</feature>
<feature type="binding site" evidence="1">
    <location>
        <position position="132"/>
    </location>
    <ligand>
        <name>Zn(2+)</name>
        <dbReference type="ChEBI" id="CHEBI:29105"/>
        <label>2</label>
    </ligand>
</feature>
<feature type="binding site" evidence="1">
    <location>
        <position position="139"/>
    </location>
    <ligand>
        <name>Zn(2+)</name>
        <dbReference type="ChEBI" id="CHEBI:29105"/>
        <label>2</label>
    </ligand>
</feature>
<feature type="splice variant" id="VSP_053448" description="In isoform 3." evidence="6">
    <original>M</original>
    <variation>MYIGALCSVATTRRHNLPTSDSGAFTDWAATTTTPSRATEDLSLGFNAGSSVIHGGLGSASVAAGVPSWPPGSSVRYGLPSSAAATEM</variation>
    <location>
        <position position="1"/>
    </location>
</feature>
<feature type="splice variant" id="VSP_053449" description="In isoform 2." evidence="6">
    <original>DGGGSREAWPGQVRAAAVFKCVRVTAVEDGDDEYAYQAVVKIGGHVFKGFLYDQGLEPKEGFPSMSDLHLGGSANNHNGVSASAPILDPPNVVYGGGGGSGGGFYS</original>
    <variation>GSFTFSLVYIAT</variation>
    <location>
        <begin position="215"/>
        <end position="320"/>
    </location>
</feature>
<feature type="sequence conflict" description="In Ref. 1; AAA87790." evidence="6" ref="1">
    <original>T</original>
    <variation>P</variation>
    <location>
        <position position="52"/>
    </location>
</feature>
<feature type="sequence conflict" description="In Ref. 1; AAA87790." evidence="6" ref="1">
    <original>A</original>
    <variation>V</variation>
    <location>
        <position position="298"/>
    </location>
</feature>
<accession>Q94CK9</accession>
<accession>F4K0X0</accession>
<accession>Q38848</accession>
<accession>Q3E9I3</accession>
<sequence length="320" mass="33618">MGMVGLRDVFLVAPAYHHQNAGVISGSDHMNSNAAAAAALGVGVIPLLTAGTPQQNVEDSDINFLGNNRRWQNNNNNHETQYLHFKSTNQTTVGTSSNNSGSGSGASGTATCQDCGNQAKKECKQRRCRTCCKSRGFDCSTHVKSTWVSAARRRERQVMPTGANPTAGSSLSTSSGTKKPRIVGSQQQQQQQATSHTSTSNTPPQSFETSSSRQDGGGSREAWPGQVRAAAVFKCVRVTAVEDGDDEYAYQAVVKIGGHVFKGFLYDQGLEPKEGFPSMSDLHLGGSANNHNGVSASAPILDPPNVVYGGGGGSGGGFYS</sequence>
<proteinExistence type="evidence at protein level"/>
<organism>
    <name type="scientific">Arabidopsis thaliana</name>
    <name type="common">Mouse-ear cress</name>
    <dbReference type="NCBI Taxonomy" id="3702"/>
    <lineage>
        <taxon>Eukaryota</taxon>
        <taxon>Viridiplantae</taxon>
        <taxon>Streptophyta</taxon>
        <taxon>Embryophyta</taxon>
        <taxon>Tracheophyta</taxon>
        <taxon>Spermatophyta</taxon>
        <taxon>Magnoliopsida</taxon>
        <taxon>eudicotyledons</taxon>
        <taxon>Gunneridae</taxon>
        <taxon>Pentapetalae</taxon>
        <taxon>rosids</taxon>
        <taxon>malvids</taxon>
        <taxon>Brassicales</taxon>
        <taxon>Brassicaceae</taxon>
        <taxon>Camelineae</taxon>
        <taxon>Arabidopsis</taxon>
    </lineage>
</organism>
<evidence type="ECO:0000250" key="1"/>
<evidence type="ECO:0000256" key="2">
    <source>
        <dbReference type="SAM" id="MobiDB-lite"/>
    </source>
</evidence>
<evidence type="ECO:0000269" key="3">
    <source>
    </source>
</evidence>
<evidence type="ECO:0000269" key="4">
    <source>
    </source>
</evidence>
<evidence type="ECO:0000269" key="5">
    <source>
    </source>
</evidence>
<evidence type="ECO:0000305" key="6"/>
<reference key="1">
    <citation type="journal article" date="1995" name="Plant Cell">
        <title>LRP1, a gene expressed in lateral and adventitious root primordia of arabidopsis.</title>
        <authorList>
            <person name="Smith D.L."/>
            <person name="Fedoroff N.V."/>
        </authorList>
    </citation>
    <scope>NUCLEOTIDE SEQUENCE [GENOMIC DNA] (ISOFORM 1)</scope>
    <scope>TISSUE SPECIFICITY</scope>
    <scope>DEVELOPMENTAL STAGE</scope>
    <source>
        <strain>cv. No-0</strain>
    </source>
</reference>
<reference key="2">
    <citation type="journal article" date="2000" name="Nature">
        <title>Sequence and analysis of chromosome 5 of the plant Arabidopsis thaliana.</title>
        <authorList>
            <person name="Tabata S."/>
            <person name="Kaneko T."/>
            <person name="Nakamura Y."/>
            <person name="Kotani H."/>
            <person name="Kato T."/>
            <person name="Asamizu E."/>
            <person name="Miyajima N."/>
            <person name="Sasamoto S."/>
            <person name="Kimura T."/>
            <person name="Hosouchi T."/>
            <person name="Kawashima K."/>
            <person name="Kohara M."/>
            <person name="Matsumoto M."/>
            <person name="Matsuno A."/>
            <person name="Muraki A."/>
            <person name="Nakayama S."/>
            <person name="Nakazaki N."/>
            <person name="Naruo K."/>
            <person name="Okumura S."/>
            <person name="Shinpo S."/>
            <person name="Takeuchi C."/>
            <person name="Wada T."/>
            <person name="Watanabe A."/>
            <person name="Yamada M."/>
            <person name="Yasuda M."/>
            <person name="Sato S."/>
            <person name="de la Bastide M."/>
            <person name="Huang E."/>
            <person name="Spiegel L."/>
            <person name="Gnoj L."/>
            <person name="O'Shaughnessy A."/>
            <person name="Preston R."/>
            <person name="Habermann K."/>
            <person name="Murray J."/>
            <person name="Johnson D."/>
            <person name="Rohlfing T."/>
            <person name="Nelson J."/>
            <person name="Stoneking T."/>
            <person name="Pepin K."/>
            <person name="Spieth J."/>
            <person name="Sekhon M."/>
            <person name="Armstrong J."/>
            <person name="Becker M."/>
            <person name="Belter E."/>
            <person name="Cordum H."/>
            <person name="Cordes M."/>
            <person name="Courtney L."/>
            <person name="Courtney W."/>
            <person name="Dante M."/>
            <person name="Du H."/>
            <person name="Edwards J."/>
            <person name="Fryman J."/>
            <person name="Haakensen B."/>
            <person name="Lamar E."/>
            <person name="Latreille P."/>
            <person name="Leonard S."/>
            <person name="Meyer R."/>
            <person name="Mulvaney E."/>
            <person name="Ozersky P."/>
            <person name="Riley A."/>
            <person name="Strowmatt C."/>
            <person name="Wagner-McPherson C."/>
            <person name="Wollam A."/>
            <person name="Yoakum M."/>
            <person name="Bell M."/>
            <person name="Dedhia N."/>
            <person name="Parnell L."/>
            <person name="Shah R."/>
            <person name="Rodriguez M."/>
            <person name="Hoon See L."/>
            <person name="Vil D."/>
            <person name="Baker J."/>
            <person name="Kirchoff K."/>
            <person name="Toth K."/>
            <person name="King L."/>
            <person name="Bahret A."/>
            <person name="Miller B."/>
            <person name="Marra M.A."/>
            <person name="Martienssen R."/>
            <person name="McCombie W.R."/>
            <person name="Wilson R.K."/>
            <person name="Murphy G."/>
            <person name="Bancroft I."/>
            <person name="Volckaert G."/>
            <person name="Wambutt R."/>
            <person name="Duesterhoeft A."/>
            <person name="Stiekema W."/>
            <person name="Pohl T."/>
            <person name="Entian K.-D."/>
            <person name="Terryn N."/>
            <person name="Hartley N."/>
            <person name="Bent E."/>
            <person name="Johnson S."/>
            <person name="Langham S.-A."/>
            <person name="McCullagh B."/>
            <person name="Robben J."/>
            <person name="Grymonprez B."/>
            <person name="Zimmermann W."/>
            <person name="Ramsperger U."/>
            <person name="Wedler H."/>
            <person name="Balke K."/>
            <person name="Wedler E."/>
            <person name="Peters S."/>
            <person name="van Staveren M."/>
            <person name="Dirkse W."/>
            <person name="Mooijman P."/>
            <person name="Klein Lankhorst R."/>
            <person name="Weitzenegger T."/>
            <person name="Bothe G."/>
            <person name="Rose M."/>
            <person name="Hauf J."/>
            <person name="Berneiser S."/>
            <person name="Hempel S."/>
            <person name="Feldpausch M."/>
            <person name="Lamberth S."/>
            <person name="Villarroel R."/>
            <person name="Gielen J."/>
            <person name="Ardiles W."/>
            <person name="Bents O."/>
            <person name="Lemcke K."/>
            <person name="Kolesov G."/>
            <person name="Mayer K.F.X."/>
            <person name="Rudd S."/>
            <person name="Schoof H."/>
            <person name="Schueller C."/>
            <person name="Zaccaria P."/>
            <person name="Mewes H.-W."/>
            <person name="Bevan M."/>
            <person name="Fransz P.F."/>
        </authorList>
    </citation>
    <scope>NUCLEOTIDE SEQUENCE [LARGE SCALE GENOMIC DNA]</scope>
    <source>
        <strain>cv. Columbia</strain>
    </source>
</reference>
<reference key="3">
    <citation type="journal article" date="2017" name="Plant J.">
        <title>Araport11: a complete reannotation of the Arabidopsis thaliana reference genome.</title>
        <authorList>
            <person name="Cheng C.Y."/>
            <person name="Krishnakumar V."/>
            <person name="Chan A.P."/>
            <person name="Thibaud-Nissen F."/>
            <person name="Schobel S."/>
            <person name="Town C.D."/>
        </authorList>
    </citation>
    <scope>GENOME REANNOTATION</scope>
    <source>
        <strain>cv. Columbia</strain>
    </source>
</reference>
<reference key="4">
    <citation type="submission" date="2005-02" db="EMBL/GenBank/DDBJ databases">
        <title>Arabidopsis ORF clones.</title>
        <authorList>
            <person name="Cheuk R.F."/>
            <person name="Chen H."/>
            <person name="Kim C.J."/>
            <person name="Shinn P."/>
            <person name="Ecker J.R."/>
        </authorList>
    </citation>
    <scope>NUCLEOTIDE SEQUENCE [LARGE SCALE MRNA] (ISOFORM 1)</scope>
    <source>
        <strain>cv. Columbia</strain>
    </source>
</reference>
<reference key="5">
    <citation type="journal article" date="2006" name="Plant J.">
        <title>Functionally redundant SHI family genes regulate Arabidopsis gynoecium development in a dose-dependent manner.</title>
        <authorList>
            <person name="Kuusk S."/>
            <person name="Sohlberg J.J."/>
            <person name="Magnus Eklund D."/>
            <person name="Sundberg E."/>
        </authorList>
    </citation>
    <scope>FUNCTION</scope>
    <scope>DISRUPTION PHENOTYPE</scope>
    <scope>SUBUNIT</scope>
    <scope>GENE FAMILY</scope>
    <scope>NOMENCLATURE</scope>
</reference>
<reference key="6">
    <citation type="journal article" date="2009" name="J. Mol. Biol.">
        <title>Regulation of root elongation by histone acetylation in Arabidopsis.</title>
        <authorList>
            <person name="Krichevsky A."/>
            <person name="Zaltsman A."/>
            <person name="Kozlovsky S.V."/>
            <person name="Tian G.-W."/>
            <person name="Citovsky V."/>
        </authorList>
    </citation>
    <scope>FUNCTION</scope>
    <scope>REPRESSION BY LDL1</scope>
</reference>
<reference key="7">
    <citation type="journal article" date="2011" name="Plant Physiol.">
        <title>Expression of Arabidopsis SHORT INTERNODES/STYLISH family genes in auxin biosynthesis zones of aerial organs is dependent on a GCC box-like regulatory element.</title>
        <authorList>
            <person name="Eklund D.M."/>
            <person name="Cierlik I."/>
            <person name="Staaldal V."/>
            <person name="Claes A.R."/>
            <person name="Vestman D."/>
            <person name="Chandler J."/>
            <person name="Sundberg E."/>
        </authorList>
    </citation>
    <scope>GENE FAMILY</scope>
</reference>
<protein>
    <recommendedName>
        <fullName>Protein LATERAL ROOT PRIMORDIUM 1</fullName>
    </recommendedName>
</protein>
<name>LRP1_ARATH</name>
<comment type="function">
    <text evidence="3 4">Transcription activator that binds DNA on 5'-ACTCTAC-3' and promotes auxin homeostasis-regulating gene expression (e.g. YUC genes), as well as genes affecting stamen development, cell expansion and timing of flowering. Synergistically with other SHI-related proteins, regulates gynoecium, stamen and leaf development in a dose-dependent manner, controlling apical-basal patterning. Promotes style and stigma formation, and influence vascular development during gynoecium development. May also have a role in the formation and/or maintenance of the shoot apical meristem (SAM). Modulates root growth.</text>
</comment>
<comment type="subunit">
    <text evidence="3">Homodimer.</text>
</comment>
<comment type="interaction">
    <interactant intactId="EBI-15199884">
        <id>Q94CK9-3</id>
    </interactant>
    <interactant intactId="EBI-15193733">
        <id>Q9SI19</id>
        <label>SRS4</label>
    </interactant>
    <organismsDiffer>false</organismsDiffer>
    <experiments>5</experiments>
</comment>
<comment type="subcellular location">
    <subcellularLocation>
        <location evidence="1">Nucleus</location>
    </subcellularLocation>
</comment>
<comment type="alternative products">
    <event type="alternative splicing"/>
    <isoform>
        <id>Q94CK9-1</id>
        <name>1</name>
        <sequence type="displayed"/>
    </isoform>
    <isoform>
        <id>Q94CK9-2</id>
        <name>2</name>
        <sequence type="described" ref="VSP_053449"/>
    </isoform>
    <isoform>
        <id>Q94CK9-3</id>
        <name>3</name>
        <sequence type="described" ref="VSP_053448"/>
    </isoform>
</comment>
<comment type="tissue specificity">
    <text evidence="5">Restricted to lateral root primordia.</text>
</comment>
<comment type="developmental stage">
    <text evidence="5">Expressed during the early stages of root primordium development and disappears prior to the emergence of lateral roots from the parent root.</text>
</comment>
<comment type="induction">
    <text evidence="4">Expression repressed by LDL1 via histone H3 and H4 deacetylation.</text>
</comment>
<comment type="disruption phenotype">
    <text evidence="3">No visible phenotype.</text>
</comment>
<comment type="similarity">
    <text evidence="6">Belongs to the SHI protein family.</text>
</comment>
<gene>
    <name type="primary">LRP1</name>
    <name type="ordered locus">At5g12330</name>
    <name type="ORF">T2L20</name>
</gene>
<dbReference type="EMBL" id="U24702">
    <property type="protein sequence ID" value="AAA87790.1"/>
    <property type="molecule type" value="Genomic_DNA"/>
</dbReference>
<dbReference type="EMBL" id="AL592312">
    <property type="protein sequence ID" value="CAC42894.1"/>
    <property type="molecule type" value="Genomic_DNA"/>
</dbReference>
<dbReference type="EMBL" id="CP002688">
    <property type="protein sequence ID" value="AED91793.1"/>
    <property type="molecule type" value="Genomic_DNA"/>
</dbReference>
<dbReference type="EMBL" id="CP002688">
    <property type="protein sequence ID" value="AED91794.1"/>
    <property type="molecule type" value="Genomic_DNA"/>
</dbReference>
<dbReference type="EMBL" id="CP002688">
    <property type="protein sequence ID" value="AED91795.1"/>
    <property type="molecule type" value="Genomic_DNA"/>
</dbReference>
<dbReference type="EMBL" id="CP002688">
    <property type="protein sequence ID" value="AED91796.1"/>
    <property type="molecule type" value="Genomic_DNA"/>
</dbReference>
<dbReference type="EMBL" id="BT020614">
    <property type="protein sequence ID" value="AAW81722.1"/>
    <property type="molecule type" value="mRNA"/>
</dbReference>
<dbReference type="RefSeq" id="NP_001190295.1">
    <molecule id="Q94CK9-3"/>
    <property type="nucleotide sequence ID" value="NM_001203366.1"/>
</dbReference>
<dbReference type="RefSeq" id="NP_568266.1">
    <molecule id="Q94CK9-1"/>
    <property type="nucleotide sequence ID" value="NM_121271.4"/>
</dbReference>
<dbReference type="RefSeq" id="NP_974771.1">
    <molecule id="Q94CK9-1"/>
    <property type="nucleotide sequence ID" value="NM_203042.1"/>
</dbReference>
<dbReference type="RefSeq" id="NP_974772.1">
    <molecule id="Q94CK9-2"/>
    <property type="nucleotide sequence ID" value="NM_203043.2"/>
</dbReference>
<dbReference type="BioGRID" id="16386">
    <property type="interactions" value="15"/>
</dbReference>
<dbReference type="FunCoup" id="Q94CK9">
    <property type="interactions" value="546"/>
</dbReference>
<dbReference type="IntAct" id="Q94CK9">
    <property type="interactions" value="12"/>
</dbReference>
<dbReference type="STRING" id="3702.Q94CK9"/>
<dbReference type="iPTMnet" id="Q94CK9"/>
<dbReference type="PaxDb" id="3702-AT5G12330.4"/>
<dbReference type="ProteomicsDB" id="238614">
    <molecule id="Q94CK9-1"/>
</dbReference>
<dbReference type="EnsemblPlants" id="AT5G12330.1">
    <molecule id="Q94CK9-1"/>
    <property type="protein sequence ID" value="AT5G12330.1"/>
    <property type="gene ID" value="AT5G12330"/>
</dbReference>
<dbReference type="EnsemblPlants" id="AT5G12330.2">
    <molecule id="Q94CK9-1"/>
    <property type="protein sequence ID" value="AT5G12330.2"/>
    <property type="gene ID" value="AT5G12330"/>
</dbReference>
<dbReference type="EnsemblPlants" id="AT5G12330.3">
    <molecule id="Q94CK9-2"/>
    <property type="protein sequence ID" value="AT5G12330.3"/>
    <property type="gene ID" value="AT5G12330"/>
</dbReference>
<dbReference type="EnsemblPlants" id="AT5G12330.4">
    <molecule id="Q94CK9-3"/>
    <property type="protein sequence ID" value="AT5G12330.4"/>
    <property type="gene ID" value="AT5G12330"/>
</dbReference>
<dbReference type="GeneID" id="831108"/>
<dbReference type="Gramene" id="AT5G12330.1">
    <molecule id="Q94CK9-1"/>
    <property type="protein sequence ID" value="AT5G12330.1"/>
    <property type="gene ID" value="AT5G12330"/>
</dbReference>
<dbReference type="Gramene" id="AT5G12330.2">
    <molecule id="Q94CK9-1"/>
    <property type="protein sequence ID" value="AT5G12330.2"/>
    <property type="gene ID" value="AT5G12330"/>
</dbReference>
<dbReference type="Gramene" id="AT5G12330.3">
    <molecule id="Q94CK9-2"/>
    <property type="protein sequence ID" value="AT5G12330.3"/>
    <property type="gene ID" value="AT5G12330"/>
</dbReference>
<dbReference type="Gramene" id="AT5G12330.4">
    <molecule id="Q94CK9-3"/>
    <property type="protein sequence ID" value="AT5G12330.4"/>
    <property type="gene ID" value="AT5G12330"/>
</dbReference>
<dbReference type="KEGG" id="ath:AT5G12330"/>
<dbReference type="Araport" id="AT5G12330"/>
<dbReference type="TAIR" id="AT5G12330">
    <property type="gene designation" value="LRP1"/>
</dbReference>
<dbReference type="eggNOG" id="ENOG502QU6D">
    <property type="taxonomic scope" value="Eukaryota"/>
</dbReference>
<dbReference type="HOGENOM" id="CLU_041493_0_0_1"/>
<dbReference type="InParanoid" id="Q94CK9"/>
<dbReference type="PhylomeDB" id="Q94CK9"/>
<dbReference type="PRO" id="PR:Q94CK9"/>
<dbReference type="Proteomes" id="UP000006548">
    <property type="component" value="Chromosome 5"/>
</dbReference>
<dbReference type="ExpressionAtlas" id="Q94CK9">
    <property type="expression patterns" value="baseline and differential"/>
</dbReference>
<dbReference type="GO" id="GO:0005634">
    <property type="term" value="C:nucleus"/>
    <property type="evidence" value="ECO:0000250"/>
    <property type="project" value="UniProtKB"/>
</dbReference>
<dbReference type="GO" id="GO:0003677">
    <property type="term" value="F:DNA binding"/>
    <property type="evidence" value="ECO:0007669"/>
    <property type="project" value="UniProtKB-KW"/>
</dbReference>
<dbReference type="GO" id="GO:0003700">
    <property type="term" value="F:DNA-binding transcription factor activity"/>
    <property type="evidence" value="ECO:0007669"/>
    <property type="project" value="InterPro"/>
</dbReference>
<dbReference type="GO" id="GO:0046872">
    <property type="term" value="F:metal ion binding"/>
    <property type="evidence" value="ECO:0007669"/>
    <property type="project" value="UniProtKB-KW"/>
</dbReference>
<dbReference type="GO" id="GO:0042803">
    <property type="term" value="F:protein homodimerization activity"/>
    <property type="evidence" value="ECO:0000314"/>
    <property type="project" value="UniProtKB"/>
</dbReference>
<dbReference type="GO" id="GO:0048653">
    <property type="term" value="P:anther development"/>
    <property type="evidence" value="ECO:0000316"/>
    <property type="project" value="TAIR"/>
</dbReference>
<dbReference type="GO" id="GO:0009851">
    <property type="term" value="P:auxin biosynthetic process"/>
    <property type="evidence" value="ECO:0007669"/>
    <property type="project" value="UniProtKB-KW"/>
</dbReference>
<dbReference type="GO" id="GO:0009734">
    <property type="term" value="P:auxin-activated signaling pathway"/>
    <property type="evidence" value="ECO:0007669"/>
    <property type="project" value="UniProtKB-KW"/>
</dbReference>
<dbReference type="GO" id="GO:0009555">
    <property type="term" value="P:pollen development"/>
    <property type="evidence" value="ECO:0000316"/>
    <property type="project" value="TAIR"/>
</dbReference>
<dbReference type="GO" id="GO:0009733">
    <property type="term" value="P:response to auxin"/>
    <property type="evidence" value="ECO:0000270"/>
    <property type="project" value="TAIR"/>
</dbReference>
<dbReference type="GO" id="GO:0048364">
    <property type="term" value="P:root development"/>
    <property type="evidence" value="ECO:0000315"/>
    <property type="project" value="TAIR"/>
</dbReference>
<dbReference type="InterPro" id="IPR007818">
    <property type="entry name" value="SHI"/>
</dbReference>
<dbReference type="InterPro" id="IPR006511">
    <property type="entry name" value="SHI_C"/>
</dbReference>
<dbReference type="InterPro" id="IPR006510">
    <property type="entry name" value="Znf_LRP1"/>
</dbReference>
<dbReference type="NCBIfam" id="TIGR01624">
    <property type="entry name" value="LRP1_Cterm"/>
    <property type="match status" value="1"/>
</dbReference>
<dbReference type="NCBIfam" id="TIGR01623">
    <property type="entry name" value="put_zinc_LRP1"/>
    <property type="match status" value="1"/>
</dbReference>
<dbReference type="PANTHER" id="PTHR31604">
    <property type="entry name" value="PROTEIN LATERAL ROOT PRIMORDIUM 1"/>
    <property type="match status" value="1"/>
</dbReference>
<dbReference type="PANTHER" id="PTHR31604:SF30">
    <property type="entry name" value="PROTEIN LATERAL ROOT PRIMORDIUM 1"/>
    <property type="match status" value="1"/>
</dbReference>
<dbReference type="Pfam" id="PF05142">
    <property type="entry name" value="DUF702"/>
    <property type="match status" value="1"/>
</dbReference>